<accession>P04682</accession>
<organism>
    <name type="scientific">Bradyrhizobium sp. (strain ANU 289)</name>
    <dbReference type="NCBI Taxonomy" id="186901"/>
    <lineage>
        <taxon>Bacteria</taxon>
        <taxon>Pseudomonadati</taxon>
        <taxon>Pseudomonadota</taxon>
        <taxon>Alphaproteobacteria</taxon>
        <taxon>Hyphomicrobiales</taxon>
        <taxon>Nitrobacteraceae</taxon>
        <taxon>Bradyrhizobium</taxon>
    </lineage>
</organism>
<name>NODD_BRASP</name>
<feature type="chain" id="PRO_0000105700" description="Nodulation protein D">
    <location>
        <begin position="1"/>
        <end position="338"/>
    </location>
</feature>
<feature type="domain" description="HTH lysR-type" evidence="1">
    <location>
        <begin position="6"/>
        <end position="63"/>
    </location>
</feature>
<feature type="DNA-binding region" description="H-T-H motif" evidence="1">
    <location>
        <begin position="23"/>
        <end position="42"/>
    </location>
</feature>
<sequence>MRFKGLDLNLLVALDALMTERNLTAAARKINLSQPAMSAAIARLRSYFRDELFTMRGRELVLTPGAEALAGPVREALLHIQLSIISRDAFDPAQSSRRFRVILSDFMTIVFFRRIVDRIAQEAPAVRFELLPFSDEPSELLRRGEVDFLILPELFMSSAHPKATLFDETLVCVGCPTNKQLSRPLTFEKYNSMGHVTAQFGRALRPNLEEWFLLEHGLKRRIEVVVQGFSLIPPILLDTSRIGTMPLRLARHFEKRMPLQIVEPPLPLPTFTEAVQWPAFHNTDPASIWMRRILLEEASNMASEHREPPTPQARLDSRPRRCKNILINHSTAWPASSF</sequence>
<protein>
    <recommendedName>
        <fullName>Nodulation protein D</fullName>
    </recommendedName>
</protein>
<proteinExistence type="inferred from homology"/>
<keyword id="KW-0010">Activator</keyword>
<keyword id="KW-0238">DNA-binding</keyword>
<keyword id="KW-0536">Nodulation</keyword>
<keyword id="KW-0678">Repressor</keyword>
<keyword id="KW-0804">Transcription</keyword>
<keyword id="KW-0805">Transcription regulation</keyword>
<reference key="1">
    <citation type="journal article" date="1986" name="Nucleic Acids Res.">
        <title>Conserved nodulation genes from the non-legume symbiont Bradyrhizobium sp. (Parasponia).</title>
        <authorList>
            <person name="Scott K.F."/>
        </authorList>
    </citation>
    <scope>NUCLEOTIDE SEQUENCE [GENOMIC DNA]</scope>
</reference>
<comment type="function">
    <text>NodD regulates the expression of the nodABCFE genes which encode other nodulation proteins. NodD is also a negative regulator of its own expression. Binds flavonoids as inducers.</text>
</comment>
<comment type="similarity">
    <text evidence="2">Belongs to the LysR transcriptional regulatory family.</text>
</comment>
<evidence type="ECO:0000255" key="1">
    <source>
        <dbReference type="PROSITE-ProRule" id="PRU00253"/>
    </source>
</evidence>
<evidence type="ECO:0000305" key="2"/>
<gene>
    <name type="primary">nodD</name>
</gene>
<dbReference type="EMBL" id="X03720">
    <property type="protein sequence ID" value="CAA27346.1"/>
    <property type="molecule type" value="Genomic_DNA"/>
</dbReference>
<dbReference type="SMR" id="P04682"/>
<dbReference type="GO" id="GO:0003677">
    <property type="term" value="F:DNA binding"/>
    <property type="evidence" value="ECO:0007669"/>
    <property type="project" value="UniProtKB-KW"/>
</dbReference>
<dbReference type="GO" id="GO:0003700">
    <property type="term" value="F:DNA-binding transcription factor activity"/>
    <property type="evidence" value="ECO:0007669"/>
    <property type="project" value="InterPro"/>
</dbReference>
<dbReference type="CDD" id="cd08462">
    <property type="entry name" value="PBP2_NodD"/>
    <property type="match status" value="1"/>
</dbReference>
<dbReference type="Gene3D" id="3.40.190.10">
    <property type="entry name" value="Periplasmic binding protein-like II"/>
    <property type="match status" value="2"/>
</dbReference>
<dbReference type="Gene3D" id="1.10.10.10">
    <property type="entry name" value="Winged helix-like DNA-binding domain superfamily/Winged helix DNA-binding domain"/>
    <property type="match status" value="1"/>
</dbReference>
<dbReference type="InterPro" id="IPR050389">
    <property type="entry name" value="LysR-type_TF"/>
</dbReference>
<dbReference type="InterPro" id="IPR005119">
    <property type="entry name" value="LysR_subst-bd"/>
</dbReference>
<dbReference type="InterPro" id="IPR037416">
    <property type="entry name" value="NodD_PBP2"/>
</dbReference>
<dbReference type="InterPro" id="IPR000847">
    <property type="entry name" value="Tscrpt_reg_HTH_LysR"/>
</dbReference>
<dbReference type="InterPro" id="IPR036388">
    <property type="entry name" value="WH-like_DNA-bd_sf"/>
</dbReference>
<dbReference type="InterPro" id="IPR036390">
    <property type="entry name" value="WH_DNA-bd_sf"/>
</dbReference>
<dbReference type="PANTHER" id="PTHR30118:SF6">
    <property type="entry name" value="HTH-TYPE TRANSCRIPTIONAL REGULATOR LEUO"/>
    <property type="match status" value="1"/>
</dbReference>
<dbReference type="PANTHER" id="PTHR30118">
    <property type="entry name" value="HTH-TYPE TRANSCRIPTIONAL REGULATOR LEUO-RELATED"/>
    <property type="match status" value="1"/>
</dbReference>
<dbReference type="Pfam" id="PF00126">
    <property type="entry name" value="HTH_1"/>
    <property type="match status" value="1"/>
</dbReference>
<dbReference type="Pfam" id="PF03466">
    <property type="entry name" value="LysR_substrate"/>
    <property type="match status" value="1"/>
</dbReference>
<dbReference type="PRINTS" id="PR00039">
    <property type="entry name" value="HTHLYSR"/>
</dbReference>
<dbReference type="SUPFAM" id="SSF53850">
    <property type="entry name" value="Periplasmic binding protein-like II"/>
    <property type="match status" value="1"/>
</dbReference>
<dbReference type="SUPFAM" id="SSF46785">
    <property type="entry name" value="Winged helix' DNA-binding domain"/>
    <property type="match status" value="1"/>
</dbReference>
<dbReference type="PROSITE" id="PS50931">
    <property type="entry name" value="HTH_LYSR"/>
    <property type="match status" value="1"/>
</dbReference>